<sequence>MAKTLTASQAAKEHVLAVSRDFISQPRLIYKTVSGVNGPLVILDDVKFPKFSEIVQLRLADGTLRSGQVLEVSGTKAVVQVFEGTSGIDAKNTLCEFTGDILRTPVSEDMLGRVFNGSGKPIDKGPPILAEDFLDIQGQPINPWSRIYPEEMIQTGISAIDVMNSIARGQKIPIFSAAGLPHNEIAAQICRQAGLVKIPGKSVLDDHEDNFAIVFAAMGVNMETARFFKQDFEENGSMENVCLFLNLANDPTIERIITPRLALTAAEFLAYQCEKHVLVILTDMSSYAEALREVSAAREEVPGRRGFPGYMYTDLATIYERAGRVEGRNGSITQIPILTMPNDDITHPIPDLTGYITEGQIYVDRQLHNRQIYPPVNVLPSLSRLMKSAIGEGMTRKDHSDVSNQLYACYAIGKDVQAMKAVVGEEALTPDDLLYLEFLTKFEKNFISQGNYENRTVFESLDIGWQLLRIFPKEMLKRIPASILAEFYPRDSRH</sequence>
<reference key="1">
    <citation type="journal article" date="1991" name="Arch. Biochem. Biophys.">
        <title>Molecular cloning and characterization of the B subunit of a vacuolar H(+)-ATPase from the midgut and Malpighian tubules of Helicoverpa virescens.</title>
        <authorList>
            <person name="Gill S.S."/>
            <person name="Ross L.S."/>
        </authorList>
    </citation>
    <scope>NUCLEOTIDE SEQUENCE [MRNA]</scope>
    <source>
        <tissue>Midgut</tissue>
    </source>
</reference>
<gene>
    <name type="primary">VHA55</name>
</gene>
<feature type="chain" id="PRO_0000144633" description="V-type proton ATPase subunit B">
    <location>
        <begin position="1"/>
        <end position="494"/>
    </location>
</feature>
<feature type="binding site" evidence="2">
    <location>
        <position position="384"/>
    </location>
    <ligand>
        <name>ATP</name>
        <dbReference type="ChEBI" id="CHEBI:30616"/>
    </ligand>
</feature>
<keyword id="KW-0067">ATP-binding</keyword>
<keyword id="KW-0375">Hydrogen ion transport</keyword>
<keyword id="KW-0406">Ion transport</keyword>
<keyword id="KW-0547">Nucleotide-binding</keyword>
<keyword id="KW-0813">Transport</keyword>
<organism>
    <name type="scientific">Heliothis virescens</name>
    <name type="common">Tobacco budworm moth</name>
    <dbReference type="NCBI Taxonomy" id="7102"/>
    <lineage>
        <taxon>Eukaryota</taxon>
        <taxon>Metazoa</taxon>
        <taxon>Ecdysozoa</taxon>
        <taxon>Arthropoda</taxon>
        <taxon>Hexapoda</taxon>
        <taxon>Insecta</taxon>
        <taxon>Pterygota</taxon>
        <taxon>Neoptera</taxon>
        <taxon>Endopterygota</taxon>
        <taxon>Lepidoptera</taxon>
        <taxon>Glossata</taxon>
        <taxon>Ditrysia</taxon>
        <taxon>Noctuoidea</taxon>
        <taxon>Noctuidae</taxon>
        <taxon>Heliothinae</taxon>
        <taxon>Heliothis</taxon>
    </lineage>
</organism>
<protein>
    <recommendedName>
        <fullName>V-type proton ATPase subunit B</fullName>
        <shortName>V-ATPase subunit B</shortName>
    </recommendedName>
    <alternativeName>
        <fullName>Vacuolar proton pump subunit B</fullName>
    </alternativeName>
</protein>
<comment type="function">
    <text evidence="1">Non-catalytic subunit of the V1 complex of vacuolar(H+)-ATPase (V-ATPase), a multisubunit enzyme composed of a peripheral complex (V1) that hydrolyzes ATP and a membrane integral complex (V0) that translocates protons (By similarity). V-ATPase is responsible for acidifying and maintaining the pH of intracellular compartments and in some cell types, is targeted to the plasma membrane, where it is responsible for acidifying the extracellular environment (By similarity). Essential for the proper assembly and activity of V-ATPase (By similarity).</text>
</comment>
<comment type="subunit">
    <text evidence="2">V-ATPase is a heteromultimeric enzyme made up of two complexes: the ATP-hydrolytic V1 complex and the proton translocation V0 complex (By similarity). The V1 complex consists of three catalytic AB heterodimers that form a heterohexamer, three peripheral stalks each consisting of EG heterodimers, one central rotor including subunits D and F, and the regulatory subunits C and H (By similarity). The proton translocation complex V0 consists of the proton transport subunit a, a ring of proteolipid subunits c9c'', rotary subunit d, subunits e and f, and the accessory subunits VhaAC45 and ATP6AP2 (By similarity).</text>
</comment>
<comment type="similarity">
    <text evidence="3">Belongs to the ATPase alpha/beta chains family.</text>
</comment>
<evidence type="ECO:0000250" key="1">
    <source>
        <dbReference type="UniProtKB" id="P15313"/>
    </source>
</evidence>
<evidence type="ECO:0000250" key="2">
    <source>
        <dbReference type="UniProtKB" id="P21281"/>
    </source>
</evidence>
<evidence type="ECO:0000305" key="3"/>
<name>VATB_HELVI</name>
<accession>P31410</accession>
<dbReference type="EMBL" id="S61797">
    <property type="protein sequence ID" value="AAB20098.1"/>
    <property type="molecule type" value="mRNA"/>
</dbReference>
<dbReference type="PIR" id="S18395">
    <property type="entry name" value="S18395"/>
</dbReference>
<dbReference type="SMR" id="P31410"/>
<dbReference type="GO" id="GO:0033180">
    <property type="term" value="C:proton-transporting V-type ATPase, V1 domain"/>
    <property type="evidence" value="ECO:0007669"/>
    <property type="project" value="InterPro"/>
</dbReference>
<dbReference type="GO" id="GO:0005524">
    <property type="term" value="F:ATP binding"/>
    <property type="evidence" value="ECO:0007669"/>
    <property type="project" value="UniProtKB-KW"/>
</dbReference>
<dbReference type="GO" id="GO:0046961">
    <property type="term" value="F:proton-transporting ATPase activity, rotational mechanism"/>
    <property type="evidence" value="ECO:0007669"/>
    <property type="project" value="InterPro"/>
</dbReference>
<dbReference type="GO" id="GO:0046034">
    <property type="term" value="P:ATP metabolic process"/>
    <property type="evidence" value="ECO:0007669"/>
    <property type="project" value="InterPro"/>
</dbReference>
<dbReference type="GO" id="GO:0007035">
    <property type="term" value="P:vacuolar acidification"/>
    <property type="evidence" value="ECO:0007669"/>
    <property type="project" value="TreeGrafter"/>
</dbReference>
<dbReference type="CDD" id="cd18112">
    <property type="entry name" value="ATP-synt_V_A-type_beta_C"/>
    <property type="match status" value="1"/>
</dbReference>
<dbReference type="CDD" id="cd18118">
    <property type="entry name" value="ATP-synt_V_A-type_beta_N"/>
    <property type="match status" value="1"/>
</dbReference>
<dbReference type="CDD" id="cd01135">
    <property type="entry name" value="V_A-ATPase_B"/>
    <property type="match status" value="1"/>
</dbReference>
<dbReference type="FunFam" id="3.40.50.12240:FF:000001">
    <property type="entry name" value="V-type proton ATPase subunit B, brain"/>
    <property type="match status" value="1"/>
</dbReference>
<dbReference type="Gene3D" id="3.40.50.12240">
    <property type="match status" value="1"/>
</dbReference>
<dbReference type="HAMAP" id="MF_00310">
    <property type="entry name" value="ATP_synth_B_arch"/>
    <property type="match status" value="1"/>
</dbReference>
<dbReference type="InterPro" id="IPR055190">
    <property type="entry name" value="ATP-synt_VA_C"/>
</dbReference>
<dbReference type="InterPro" id="IPR020003">
    <property type="entry name" value="ATPase_a/bsu_AS"/>
</dbReference>
<dbReference type="InterPro" id="IPR004100">
    <property type="entry name" value="ATPase_F1/V1/A1_a/bsu_N"/>
</dbReference>
<dbReference type="InterPro" id="IPR000194">
    <property type="entry name" value="ATPase_F1/V1/A1_a/bsu_nucl-bd"/>
</dbReference>
<dbReference type="InterPro" id="IPR005723">
    <property type="entry name" value="ATPase_V1-cplx_bsu"/>
</dbReference>
<dbReference type="InterPro" id="IPR027417">
    <property type="entry name" value="P-loop_NTPase"/>
</dbReference>
<dbReference type="InterPro" id="IPR022879">
    <property type="entry name" value="V-ATPase_su_B/beta"/>
</dbReference>
<dbReference type="NCBIfam" id="NF003235">
    <property type="entry name" value="PRK04196.1"/>
    <property type="match status" value="1"/>
</dbReference>
<dbReference type="NCBIfam" id="TIGR01040">
    <property type="entry name" value="V-ATPase_V1_B"/>
    <property type="match status" value="1"/>
</dbReference>
<dbReference type="PANTHER" id="PTHR43389">
    <property type="entry name" value="V-TYPE PROTON ATPASE SUBUNIT B"/>
    <property type="match status" value="1"/>
</dbReference>
<dbReference type="PANTHER" id="PTHR43389:SF4">
    <property type="entry name" value="V-TYPE PROTON ATPASE SUBUNIT B"/>
    <property type="match status" value="1"/>
</dbReference>
<dbReference type="Pfam" id="PF00006">
    <property type="entry name" value="ATP-synt_ab"/>
    <property type="match status" value="1"/>
</dbReference>
<dbReference type="Pfam" id="PF02874">
    <property type="entry name" value="ATP-synt_ab_N"/>
    <property type="match status" value="1"/>
</dbReference>
<dbReference type="Pfam" id="PF22919">
    <property type="entry name" value="ATP-synt_VA_C"/>
    <property type="match status" value="1"/>
</dbReference>
<dbReference type="PIRSF" id="PIRSF039114">
    <property type="entry name" value="V-ATPsynth_beta/V-ATPase_B"/>
    <property type="match status" value="1"/>
</dbReference>
<dbReference type="SUPFAM" id="SSF52540">
    <property type="entry name" value="P-loop containing nucleoside triphosphate hydrolases"/>
    <property type="match status" value="1"/>
</dbReference>
<dbReference type="PROSITE" id="PS00152">
    <property type="entry name" value="ATPASE_ALPHA_BETA"/>
    <property type="match status" value="1"/>
</dbReference>
<proteinExistence type="evidence at transcript level"/>